<reference key="1">
    <citation type="journal article" date="2009" name="Genome Biol.">
        <title>Genomic and genetic analyses of diversity and plant interactions of Pseudomonas fluorescens.</title>
        <authorList>
            <person name="Silby M.W."/>
            <person name="Cerdeno-Tarraga A.M."/>
            <person name="Vernikos G.S."/>
            <person name="Giddens S.R."/>
            <person name="Jackson R.W."/>
            <person name="Preston G.M."/>
            <person name="Zhang X.-X."/>
            <person name="Moon C.D."/>
            <person name="Gehrig S.M."/>
            <person name="Godfrey S.A.C."/>
            <person name="Knight C.G."/>
            <person name="Malone J.G."/>
            <person name="Robinson Z."/>
            <person name="Spiers A.J."/>
            <person name="Harris S."/>
            <person name="Challis G.L."/>
            <person name="Yaxley A.M."/>
            <person name="Harris D."/>
            <person name="Seeger K."/>
            <person name="Murphy L."/>
            <person name="Rutter S."/>
            <person name="Squares R."/>
            <person name="Quail M.A."/>
            <person name="Saunders E."/>
            <person name="Mavromatis K."/>
            <person name="Brettin T.S."/>
            <person name="Bentley S.D."/>
            <person name="Hothersall J."/>
            <person name="Stephens E."/>
            <person name="Thomas C.M."/>
            <person name="Parkhill J."/>
            <person name="Levy S.B."/>
            <person name="Rainey P.B."/>
            <person name="Thomson N.R."/>
        </authorList>
    </citation>
    <scope>NUCLEOTIDE SEQUENCE [LARGE SCALE GENOMIC DNA]</scope>
    <source>
        <strain>Pf0-1</strain>
    </source>
</reference>
<sequence length="149" mass="17216">MAAKVEPFWIRKTLDQLDHEEWESLCDGCGLCCLQKLEDEEDNSVYYTRIACKLLDLKTCQCSDYPNRMKFVPDCIQLTPGQAEEFKWLPPTCGYRLVSEGKDLPLWHHLVCGDRDAVHHERISQSGRMLAEGSVPEDDWEDHLIFRAG</sequence>
<evidence type="ECO:0000255" key="1">
    <source>
        <dbReference type="HAMAP-Rule" id="MF_00676"/>
    </source>
</evidence>
<organism>
    <name type="scientific">Pseudomonas fluorescens (strain Pf0-1)</name>
    <dbReference type="NCBI Taxonomy" id="205922"/>
    <lineage>
        <taxon>Bacteria</taxon>
        <taxon>Pseudomonadati</taxon>
        <taxon>Pseudomonadota</taxon>
        <taxon>Gammaproteobacteria</taxon>
        <taxon>Pseudomonadales</taxon>
        <taxon>Pseudomonadaceae</taxon>
        <taxon>Pseudomonas</taxon>
    </lineage>
</organism>
<feature type="chain" id="PRO_1000044802" description="UPF0260 protein Pfl01_1392">
    <location>
        <begin position="1"/>
        <end position="149"/>
    </location>
</feature>
<name>Y1392_PSEPF</name>
<protein>
    <recommendedName>
        <fullName evidence="1">UPF0260 protein Pfl01_1392</fullName>
    </recommendedName>
</protein>
<proteinExistence type="inferred from homology"/>
<dbReference type="EMBL" id="CP000094">
    <property type="protein sequence ID" value="ABA73135.1"/>
    <property type="molecule type" value="Genomic_DNA"/>
</dbReference>
<dbReference type="RefSeq" id="WP_007958058.1">
    <property type="nucleotide sequence ID" value="NC_007492.2"/>
</dbReference>
<dbReference type="KEGG" id="pfo:Pfl01_1392"/>
<dbReference type="eggNOG" id="COG2983">
    <property type="taxonomic scope" value="Bacteria"/>
</dbReference>
<dbReference type="HOGENOM" id="CLU_109769_0_1_6"/>
<dbReference type="Proteomes" id="UP000002704">
    <property type="component" value="Chromosome"/>
</dbReference>
<dbReference type="HAMAP" id="MF_00676">
    <property type="entry name" value="UPF0260"/>
    <property type="match status" value="1"/>
</dbReference>
<dbReference type="InterPro" id="IPR005358">
    <property type="entry name" value="Puta_zinc/iron-chelating_dom"/>
</dbReference>
<dbReference type="InterPro" id="IPR008228">
    <property type="entry name" value="UCP006173"/>
</dbReference>
<dbReference type="NCBIfam" id="NF003501">
    <property type="entry name" value="PRK05170.1-5"/>
    <property type="match status" value="1"/>
</dbReference>
<dbReference type="NCBIfam" id="NF003502">
    <property type="entry name" value="PRK05170.1-6"/>
    <property type="match status" value="1"/>
</dbReference>
<dbReference type="NCBIfam" id="NF003507">
    <property type="entry name" value="PRK05170.2-5"/>
    <property type="match status" value="1"/>
</dbReference>
<dbReference type="PANTHER" id="PTHR37421">
    <property type="entry name" value="UPF0260 PROTEIN YCGN"/>
    <property type="match status" value="1"/>
</dbReference>
<dbReference type="PANTHER" id="PTHR37421:SF1">
    <property type="entry name" value="UPF0260 PROTEIN YCGN"/>
    <property type="match status" value="1"/>
</dbReference>
<dbReference type="Pfam" id="PF03692">
    <property type="entry name" value="CxxCxxCC"/>
    <property type="match status" value="1"/>
</dbReference>
<dbReference type="PIRSF" id="PIRSF006173">
    <property type="entry name" value="UCP006173"/>
    <property type="match status" value="1"/>
</dbReference>
<accession>Q3KGH1</accession>
<gene>
    <name type="ordered locus">Pfl01_1392</name>
</gene>
<comment type="similarity">
    <text evidence="1">Belongs to the UPF0260 family.</text>
</comment>